<keyword id="KW-0963">Cytoplasm</keyword>
<keyword id="KW-0251">Elongation factor</keyword>
<keyword id="KW-0648">Protein biosynthesis</keyword>
<accession>C1CCJ8</accession>
<gene>
    <name evidence="1" type="primary">efp</name>
    <name type="ordered locus">SPJ_0419</name>
</gene>
<sequence>MIEASKLKAGMTFETADGKLIRVLEASHHKPGKGNTIMRMKLRDVRTGSTFDTSYRPEEKFEQAIIETVPAQYLYKMDDTAYFMNTETYDQYEIPVVNVENELLYILENSDVKIQFYGTEVIGVTVPTTVELTVAETQPSIKGATVTGSGKPATMETGLVVNVPDFIEAGQKLVINTAEGTYVSRA</sequence>
<protein>
    <recommendedName>
        <fullName evidence="1">Elongation factor P</fullName>
        <shortName evidence="1">EF-P</shortName>
    </recommendedName>
</protein>
<comment type="function">
    <text evidence="1">Involved in peptide bond synthesis. Stimulates efficient translation and peptide-bond synthesis on native or reconstituted 70S ribosomes in vitro. Probably functions indirectly by altering the affinity of the ribosome for aminoacyl-tRNA, thus increasing their reactivity as acceptors for peptidyl transferase.</text>
</comment>
<comment type="pathway">
    <text evidence="1">Protein biosynthesis; polypeptide chain elongation.</text>
</comment>
<comment type="subcellular location">
    <subcellularLocation>
        <location evidence="1">Cytoplasm</location>
    </subcellularLocation>
</comment>
<comment type="similarity">
    <text evidence="1">Belongs to the elongation factor P family.</text>
</comment>
<organism>
    <name type="scientific">Streptococcus pneumoniae (strain JJA)</name>
    <dbReference type="NCBI Taxonomy" id="488222"/>
    <lineage>
        <taxon>Bacteria</taxon>
        <taxon>Bacillati</taxon>
        <taxon>Bacillota</taxon>
        <taxon>Bacilli</taxon>
        <taxon>Lactobacillales</taxon>
        <taxon>Streptococcaceae</taxon>
        <taxon>Streptococcus</taxon>
    </lineage>
</organism>
<reference key="1">
    <citation type="journal article" date="2010" name="Genome Biol.">
        <title>Structure and dynamics of the pan-genome of Streptococcus pneumoniae and closely related species.</title>
        <authorList>
            <person name="Donati C."/>
            <person name="Hiller N.L."/>
            <person name="Tettelin H."/>
            <person name="Muzzi A."/>
            <person name="Croucher N.J."/>
            <person name="Angiuoli S.V."/>
            <person name="Oggioni M."/>
            <person name="Dunning Hotopp J.C."/>
            <person name="Hu F.Z."/>
            <person name="Riley D.R."/>
            <person name="Covacci A."/>
            <person name="Mitchell T.J."/>
            <person name="Bentley S.D."/>
            <person name="Kilian M."/>
            <person name="Ehrlich G.D."/>
            <person name="Rappuoli R."/>
            <person name="Moxon E.R."/>
            <person name="Masignani V."/>
        </authorList>
    </citation>
    <scope>NUCLEOTIDE SEQUENCE [LARGE SCALE GENOMIC DNA]</scope>
    <source>
        <strain>JJA</strain>
    </source>
</reference>
<name>EFP_STRZJ</name>
<proteinExistence type="inferred from homology"/>
<evidence type="ECO:0000255" key="1">
    <source>
        <dbReference type="HAMAP-Rule" id="MF_00141"/>
    </source>
</evidence>
<feature type="chain" id="PRO_1000123032" description="Elongation factor P">
    <location>
        <begin position="1"/>
        <end position="186"/>
    </location>
</feature>
<dbReference type="EMBL" id="CP000919">
    <property type="protein sequence ID" value="ACO19304.1"/>
    <property type="molecule type" value="Genomic_DNA"/>
</dbReference>
<dbReference type="RefSeq" id="WP_000568640.1">
    <property type="nucleotide sequence ID" value="NC_012466.1"/>
</dbReference>
<dbReference type="SMR" id="C1CCJ8"/>
<dbReference type="GeneID" id="49599200"/>
<dbReference type="KEGG" id="sjj:SPJ_0419"/>
<dbReference type="HOGENOM" id="CLU_074944_3_0_9"/>
<dbReference type="UniPathway" id="UPA00345"/>
<dbReference type="Proteomes" id="UP000002206">
    <property type="component" value="Chromosome"/>
</dbReference>
<dbReference type="GO" id="GO:0005737">
    <property type="term" value="C:cytoplasm"/>
    <property type="evidence" value="ECO:0007669"/>
    <property type="project" value="UniProtKB-SubCell"/>
</dbReference>
<dbReference type="GO" id="GO:0003746">
    <property type="term" value="F:translation elongation factor activity"/>
    <property type="evidence" value="ECO:0007669"/>
    <property type="project" value="UniProtKB-UniRule"/>
</dbReference>
<dbReference type="GO" id="GO:0043043">
    <property type="term" value="P:peptide biosynthetic process"/>
    <property type="evidence" value="ECO:0007669"/>
    <property type="project" value="InterPro"/>
</dbReference>
<dbReference type="CDD" id="cd04470">
    <property type="entry name" value="S1_EF-P_repeat_1"/>
    <property type="match status" value="1"/>
</dbReference>
<dbReference type="CDD" id="cd05794">
    <property type="entry name" value="S1_EF-P_repeat_2"/>
    <property type="match status" value="1"/>
</dbReference>
<dbReference type="FunFam" id="2.30.30.30:FF:000003">
    <property type="entry name" value="Elongation factor P"/>
    <property type="match status" value="1"/>
</dbReference>
<dbReference type="FunFam" id="2.40.50.140:FF:000004">
    <property type="entry name" value="Elongation factor P"/>
    <property type="match status" value="1"/>
</dbReference>
<dbReference type="FunFam" id="2.40.50.140:FF:000009">
    <property type="entry name" value="Elongation factor P"/>
    <property type="match status" value="1"/>
</dbReference>
<dbReference type="Gene3D" id="2.30.30.30">
    <property type="match status" value="1"/>
</dbReference>
<dbReference type="Gene3D" id="2.40.50.140">
    <property type="entry name" value="Nucleic acid-binding proteins"/>
    <property type="match status" value="2"/>
</dbReference>
<dbReference type="HAMAP" id="MF_00141">
    <property type="entry name" value="EF_P"/>
    <property type="match status" value="1"/>
</dbReference>
<dbReference type="InterPro" id="IPR015365">
    <property type="entry name" value="Elong-fact-P_C"/>
</dbReference>
<dbReference type="InterPro" id="IPR012340">
    <property type="entry name" value="NA-bd_OB-fold"/>
</dbReference>
<dbReference type="InterPro" id="IPR014722">
    <property type="entry name" value="Rib_uL2_dom2"/>
</dbReference>
<dbReference type="InterPro" id="IPR020599">
    <property type="entry name" value="Transl_elong_fac_P/YeiP"/>
</dbReference>
<dbReference type="InterPro" id="IPR013185">
    <property type="entry name" value="Transl_elong_KOW-like"/>
</dbReference>
<dbReference type="InterPro" id="IPR001059">
    <property type="entry name" value="Transl_elong_P/YeiP_cen"/>
</dbReference>
<dbReference type="InterPro" id="IPR013852">
    <property type="entry name" value="Transl_elong_P/YeiP_CS"/>
</dbReference>
<dbReference type="InterPro" id="IPR011768">
    <property type="entry name" value="Transl_elongation_fac_P"/>
</dbReference>
<dbReference type="InterPro" id="IPR008991">
    <property type="entry name" value="Translation_prot_SH3-like_sf"/>
</dbReference>
<dbReference type="NCBIfam" id="TIGR00038">
    <property type="entry name" value="efp"/>
    <property type="match status" value="1"/>
</dbReference>
<dbReference type="NCBIfam" id="NF001810">
    <property type="entry name" value="PRK00529.1"/>
    <property type="match status" value="1"/>
</dbReference>
<dbReference type="PANTHER" id="PTHR30053">
    <property type="entry name" value="ELONGATION FACTOR P"/>
    <property type="match status" value="1"/>
</dbReference>
<dbReference type="PANTHER" id="PTHR30053:SF12">
    <property type="entry name" value="ELONGATION FACTOR P (EF-P) FAMILY PROTEIN"/>
    <property type="match status" value="1"/>
</dbReference>
<dbReference type="Pfam" id="PF01132">
    <property type="entry name" value="EFP"/>
    <property type="match status" value="1"/>
</dbReference>
<dbReference type="Pfam" id="PF08207">
    <property type="entry name" value="EFP_N"/>
    <property type="match status" value="1"/>
</dbReference>
<dbReference type="Pfam" id="PF09285">
    <property type="entry name" value="Elong-fact-P_C"/>
    <property type="match status" value="1"/>
</dbReference>
<dbReference type="PIRSF" id="PIRSF005901">
    <property type="entry name" value="EF-P"/>
    <property type="match status" value="1"/>
</dbReference>
<dbReference type="SMART" id="SM01185">
    <property type="entry name" value="EFP"/>
    <property type="match status" value="1"/>
</dbReference>
<dbReference type="SMART" id="SM00841">
    <property type="entry name" value="Elong-fact-P_C"/>
    <property type="match status" value="1"/>
</dbReference>
<dbReference type="SUPFAM" id="SSF50249">
    <property type="entry name" value="Nucleic acid-binding proteins"/>
    <property type="match status" value="2"/>
</dbReference>
<dbReference type="SUPFAM" id="SSF50104">
    <property type="entry name" value="Translation proteins SH3-like domain"/>
    <property type="match status" value="1"/>
</dbReference>
<dbReference type="PROSITE" id="PS01275">
    <property type="entry name" value="EFP"/>
    <property type="match status" value="1"/>
</dbReference>